<dbReference type="EC" id="6.3.4.4" evidence="1"/>
<dbReference type="EMBL" id="CR954246">
    <property type="protein sequence ID" value="CAI85374.1"/>
    <property type="molecule type" value="Genomic_DNA"/>
</dbReference>
<dbReference type="SMR" id="Q3IEZ3"/>
<dbReference type="STRING" id="326442.PSHAa0275"/>
<dbReference type="KEGG" id="pha:PSHAa0275"/>
<dbReference type="PATRIC" id="fig|326442.8.peg.262"/>
<dbReference type="eggNOG" id="COG0104">
    <property type="taxonomic scope" value="Bacteria"/>
</dbReference>
<dbReference type="HOGENOM" id="CLU_029848_0_0_6"/>
<dbReference type="BioCyc" id="PHAL326442:PSHA_RS01365-MONOMER"/>
<dbReference type="UniPathway" id="UPA00075">
    <property type="reaction ID" value="UER00335"/>
</dbReference>
<dbReference type="Proteomes" id="UP000006843">
    <property type="component" value="Chromosome I"/>
</dbReference>
<dbReference type="GO" id="GO:0005737">
    <property type="term" value="C:cytoplasm"/>
    <property type="evidence" value="ECO:0007669"/>
    <property type="project" value="UniProtKB-SubCell"/>
</dbReference>
<dbReference type="GO" id="GO:0004019">
    <property type="term" value="F:adenylosuccinate synthase activity"/>
    <property type="evidence" value="ECO:0007669"/>
    <property type="project" value="UniProtKB-UniRule"/>
</dbReference>
<dbReference type="GO" id="GO:0005525">
    <property type="term" value="F:GTP binding"/>
    <property type="evidence" value="ECO:0007669"/>
    <property type="project" value="UniProtKB-UniRule"/>
</dbReference>
<dbReference type="GO" id="GO:0000287">
    <property type="term" value="F:magnesium ion binding"/>
    <property type="evidence" value="ECO:0007669"/>
    <property type="project" value="UniProtKB-UniRule"/>
</dbReference>
<dbReference type="GO" id="GO:0044208">
    <property type="term" value="P:'de novo' AMP biosynthetic process"/>
    <property type="evidence" value="ECO:0007669"/>
    <property type="project" value="UniProtKB-UniRule"/>
</dbReference>
<dbReference type="GO" id="GO:0046040">
    <property type="term" value="P:IMP metabolic process"/>
    <property type="evidence" value="ECO:0007669"/>
    <property type="project" value="TreeGrafter"/>
</dbReference>
<dbReference type="CDD" id="cd03108">
    <property type="entry name" value="AdSS"/>
    <property type="match status" value="1"/>
</dbReference>
<dbReference type="FunFam" id="1.10.300.10:FF:000001">
    <property type="entry name" value="Adenylosuccinate synthetase"/>
    <property type="match status" value="1"/>
</dbReference>
<dbReference type="FunFam" id="3.90.170.10:FF:000001">
    <property type="entry name" value="Adenylosuccinate synthetase"/>
    <property type="match status" value="1"/>
</dbReference>
<dbReference type="Gene3D" id="3.40.440.10">
    <property type="entry name" value="Adenylosuccinate Synthetase, subunit A, domain 1"/>
    <property type="match status" value="1"/>
</dbReference>
<dbReference type="Gene3D" id="1.10.300.10">
    <property type="entry name" value="Adenylosuccinate Synthetase, subunit A, domain 2"/>
    <property type="match status" value="1"/>
</dbReference>
<dbReference type="Gene3D" id="3.90.170.10">
    <property type="entry name" value="Adenylosuccinate Synthetase, subunit A, domain 3"/>
    <property type="match status" value="1"/>
</dbReference>
<dbReference type="HAMAP" id="MF_00011">
    <property type="entry name" value="Adenylosucc_synth"/>
    <property type="match status" value="1"/>
</dbReference>
<dbReference type="InterPro" id="IPR018220">
    <property type="entry name" value="Adenylosuccin_syn_GTP-bd"/>
</dbReference>
<dbReference type="InterPro" id="IPR033128">
    <property type="entry name" value="Adenylosuccin_syn_Lys_AS"/>
</dbReference>
<dbReference type="InterPro" id="IPR042109">
    <property type="entry name" value="Adenylosuccinate_synth_dom1"/>
</dbReference>
<dbReference type="InterPro" id="IPR042110">
    <property type="entry name" value="Adenylosuccinate_synth_dom2"/>
</dbReference>
<dbReference type="InterPro" id="IPR042111">
    <property type="entry name" value="Adenylosuccinate_synth_dom3"/>
</dbReference>
<dbReference type="InterPro" id="IPR001114">
    <property type="entry name" value="Adenylosuccinate_synthetase"/>
</dbReference>
<dbReference type="InterPro" id="IPR027417">
    <property type="entry name" value="P-loop_NTPase"/>
</dbReference>
<dbReference type="NCBIfam" id="NF002223">
    <property type="entry name" value="PRK01117.1"/>
    <property type="match status" value="1"/>
</dbReference>
<dbReference type="NCBIfam" id="TIGR00184">
    <property type="entry name" value="purA"/>
    <property type="match status" value="1"/>
</dbReference>
<dbReference type="PANTHER" id="PTHR11846">
    <property type="entry name" value="ADENYLOSUCCINATE SYNTHETASE"/>
    <property type="match status" value="1"/>
</dbReference>
<dbReference type="PANTHER" id="PTHR11846:SF0">
    <property type="entry name" value="ADENYLOSUCCINATE SYNTHETASE"/>
    <property type="match status" value="1"/>
</dbReference>
<dbReference type="Pfam" id="PF00709">
    <property type="entry name" value="Adenylsucc_synt"/>
    <property type="match status" value="1"/>
</dbReference>
<dbReference type="SMART" id="SM00788">
    <property type="entry name" value="Adenylsucc_synt"/>
    <property type="match status" value="1"/>
</dbReference>
<dbReference type="SUPFAM" id="SSF52540">
    <property type="entry name" value="P-loop containing nucleoside triphosphate hydrolases"/>
    <property type="match status" value="1"/>
</dbReference>
<dbReference type="PROSITE" id="PS01266">
    <property type="entry name" value="ADENYLOSUCCIN_SYN_1"/>
    <property type="match status" value="1"/>
</dbReference>
<dbReference type="PROSITE" id="PS00513">
    <property type="entry name" value="ADENYLOSUCCIN_SYN_2"/>
    <property type="match status" value="1"/>
</dbReference>
<comment type="function">
    <text evidence="1">Plays an important role in the de novo pathway of purine nucleotide biosynthesis. Catalyzes the first committed step in the biosynthesis of AMP from IMP.</text>
</comment>
<comment type="catalytic activity">
    <reaction evidence="1">
        <text>IMP + L-aspartate + GTP = N(6)-(1,2-dicarboxyethyl)-AMP + GDP + phosphate + 2 H(+)</text>
        <dbReference type="Rhea" id="RHEA:15753"/>
        <dbReference type="ChEBI" id="CHEBI:15378"/>
        <dbReference type="ChEBI" id="CHEBI:29991"/>
        <dbReference type="ChEBI" id="CHEBI:37565"/>
        <dbReference type="ChEBI" id="CHEBI:43474"/>
        <dbReference type="ChEBI" id="CHEBI:57567"/>
        <dbReference type="ChEBI" id="CHEBI:58053"/>
        <dbReference type="ChEBI" id="CHEBI:58189"/>
        <dbReference type="EC" id="6.3.4.4"/>
    </reaction>
</comment>
<comment type="cofactor">
    <cofactor evidence="1">
        <name>Mg(2+)</name>
        <dbReference type="ChEBI" id="CHEBI:18420"/>
    </cofactor>
    <text evidence="1">Binds 1 Mg(2+) ion per subunit.</text>
</comment>
<comment type="pathway">
    <text evidence="1">Purine metabolism; AMP biosynthesis via de novo pathway; AMP from IMP: step 1/2.</text>
</comment>
<comment type="subunit">
    <text evidence="1">Homodimer.</text>
</comment>
<comment type="subcellular location">
    <subcellularLocation>
        <location evidence="1">Cytoplasm</location>
    </subcellularLocation>
</comment>
<comment type="similarity">
    <text evidence="1">Belongs to the adenylosuccinate synthetase family.</text>
</comment>
<accession>Q3IEZ3</accession>
<organism>
    <name type="scientific">Pseudoalteromonas translucida (strain TAC 125)</name>
    <dbReference type="NCBI Taxonomy" id="326442"/>
    <lineage>
        <taxon>Bacteria</taxon>
        <taxon>Pseudomonadati</taxon>
        <taxon>Pseudomonadota</taxon>
        <taxon>Gammaproteobacteria</taxon>
        <taxon>Alteromonadales</taxon>
        <taxon>Pseudoalteromonadaceae</taxon>
        <taxon>Pseudoalteromonas</taxon>
    </lineage>
</organism>
<evidence type="ECO:0000255" key="1">
    <source>
        <dbReference type="HAMAP-Rule" id="MF_00011"/>
    </source>
</evidence>
<sequence>MGKNVVVLGTQWGDEGKGKVVDLLTDKASLVVRYQGGHNAGHTLVIDGEKTVLHLIPSGVLRDNVKCVIGNGVVLSPEALMREIGMLEARGVPVRERLLISAACPLILPFHVALDVARETARGDKPIGTTGRGIGPAYEDKVARRGLRVGDLFNPELFAAKLEEVLEYHNFTLVNYYKVDAVDFQKTFDDAMAVADILKAMIVDVTELLDQTRLAGDNILFEGAQGTLLDIDHGTYPYVTSSNTTAGGVATGAGFGPLHLDYVLGIIKAYTTRVGSGPFPTELYDGLDKQDPVGKHLGDKGHEFGATTGRLRRTGWLDAVAMRRAVQINSISGFCLTKLDVLDGLETLKICTGYKLEDGTVTNVTPLAAEGYEKVTPIYEEMPGWSENTVGVTSLDGLPKAAIDYVKRIEELTGVPVDIISTGPDRVETMILRNPFA</sequence>
<gene>
    <name evidence="1" type="primary">purA1</name>
    <name type="ordered locus">PSHAa0275</name>
</gene>
<name>PURA1_PSET1</name>
<proteinExistence type="inferred from homology"/>
<protein>
    <recommendedName>
        <fullName evidence="1">Adenylosuccinate synthetase 1</fullName>
        <shortName evidence="1">AMPSase 1</shortName>
        <shortName evidence="1">AdSS 1</shortName>
        <ecNumber evidence="1">6.3.4.4</ecNumber>
    </recommendedName>
    <alternativeName>
        <fullName evidence="1">IMP--aspartate ligase 1</fullName>
    </alternativeName>
</protein>
<feature type="chain" id="PRO_0000224305" description="Adenylosuccinate synthetase 1">
    <location>
        <begin position="1"/>
        <end position="437"/>
    </location>
</feature>
<feature type="active site" description="Proton acceptor" evidence="1">
    <location>
        <position position="14"/>
    </location>
</feature>
<feature type="active site" description="Proton donor" evidence="1">
    <location>
        <position position="42"/>
    </location>
</feature>
<feature type="binding site" evidence="1">
    <location>
        <begin position="13"/>
        <end position="19"/>
    </location>
    <ligand>
        <name>GTP</name>
        <dbReference type="ChEBI" id="CHEBI:37565"/>
    </ligand>
</feature>
<feature type="binding site" description="in other chain" evidence="1">
    <location>
        <begin position="14"/>
        <end position="17"/>
    </location>
    <ligand>
        <name>IMP</name>
        <dbReference type="ChEBI" id="CHEBI:58053"/>
        <note>ligand shared between dimeric partners</note>
    </ligand>
</feature>
<feature type="binding site" evidence="1">
    <location>
        <position position="14"/>
    </location>
    <ligand>
        <name>Mg(2+)</name>
        <dbReference type="ChEBI" id="CHEBI:18420"/>
    </ligand>
</feature>
<feature type="binding site" description="in other chain" evidence="1">
    <location>
        <begin position="39"/>
        <end position="42"/>
    </location>
    <ligand>
        <name>IMP</name>
        <dbReference type="ChEBI" id="CHEBI:58053"/>
        <note>ligand shared between dimeric partners</note>
    </ligand>
</feature>
<feature type="binding site" evidence="1">
    <location>
        <begin position="41"/>
        <end position="43"/>
    </location>
    <ligand>
        <name>GTP</name>
        <dbReference type="ChEBI" id="CHEBI:37565"/>
    </ligand>
</feature>
<feature type="binding site" evidence="1">
    <location>
        <position position="41"/>
    </location>
    <ligand>
        <name>Mg(2+)</name>
        <dbReference type="ChEBI" id="CHEBI:18420"/>
    </ligand>
</feature>
<feature type="binding site" description="in other chain" evidence="1">
    <location>
        <position position="130"/>
    </location>
    <ligand>
        <name>IMP</name>
        <dbReference type="ChEBI" id="CHEBI:58053"/>
        <note>ligand shared between dimeric partners</note>
    </ligand>
</feature>
<feature type="binding site" evidence="1">
    <location>
        <position position="144"/>
    </location>
    <ligand>
        <name>IMP</name>
        <dbReference type="ChEBI" id="CHEBI:58053"/>
        <note>ligand shared between dimeric partners</note>
    </ligand>
</feature>
<feature type="binding site" description="in other chain" evidence="1">
    <location>
        <position position="225"/>
    </location>
    <ligand>
        <name>IMP</name>
        <dbReference type="ChEBI" id="CHEBI:58053"/>
        <note>ligand shared between dimeric partners</note>
    </ligand>
</feature>
<feature type="binding site" description="in other chain" evidence="1">
    <location>
        <position position="240"/>
    </location>
    <ligand>
        <name>IMP</name>
        <dbReference type="ChEBI" id="CHEBI:58053"/>
        <note>ligand shared between dimeric partners</note>
    </ligand>
</feature>
<feature type="binding site" evidence="1">
    <location>
        <begin position="306"/>
        <end position="312"/>
    </location>
    <ligand>
        <name>substrate</name>
    </ligand>
</feature>
<feature type="binding site" description="in other chain" evidence="1">
    <location>
        <position position="310"/>
    </location>
    <ligand>
        <name>IMP</name>
        <dbReference type="ChEBI" id="CHEBI:58053"/>
        <note>ligand shared between dimeric partners</note>
    </ligand>
</feature>
<feature type="binding site" evidence="1">
    <location>
        <position position="312"/>
    </location>
    <ligand>
        <name>GTP</name>
        <dbReference type="ChEBI" id="CHEBI:37565"/>
    </ligand>
</feature>
<feature type="binding site" evidence="1">
    <location>
        <begin position="338"/>
        <end position="340"/>
    </location>
    <ligand>
        <name>GTP</name>
        <dbReference type="ChEBI" id="CHEBI:37565"/>
    </ligand>
</feature>
<feature type="binding site" evidence="1">
    <location>
        <begin position="421"/>
        <end position="423"/>
    </location>
    <ligand>
        <name>GTP</name>
        <dbReference type="ChEBI" id="CHEBI:37565"/>
    </ligand>
</feature>
<reference key="1">
    <citation type="journal article" date="2005" name="Genome Res.">
        <title>Coping with cold: the genome of the versatile marine Antarctica bacterium Pseudoalteromonas haloplanktis TAC125.</title>
        <authorList>
            <person name="Medigue C."/>
            <person name="Krin E."/>
            <person name="Pascal G."/>
            <person name="Barbe V."/>
            <person name="Bernsel A."/>
            <person name="Bertin P.N."/>
            <person name="Cheung F."/>
            <person name="Cruveiller S."/>
            <person name="D'Amico S."/>
            <person name="Duilio A."/>
            <person name="Fang G."/>
            <person name="Feller G."/>
            <person name="Ho C."/>
            <person name="Mangenot S."/>
            <person name="Marino G."/>
            <person name="Nilsson J."/>
            <person name="Parrilli E."/>
            <person name="Rocha E.P.C."/>
            <person name="Rouy Z."/>
            <person name="Sekowska A."/>
            <person name="Tutino M.L."/>
            <person name="Vallenet D."/>
            <person name="von Heijne G."/>
            <person name="Danchin A."/>
        </authorList>
    </citation>
    <scope>NUCLEOTIDE SEQUENCE [LARGE SCALE GENOMIC DNA]</scope>
    <source>
        <strain>TAC 125</strain>
    </source>
</reference>
<keyword id="KW-0963">Cytoplasm</keyword>
<keyword id="KW-0342">GTP-binding</keyword>
<keyword id="KW-0436">Ligase</keyword>
<keyword id="KW-0460">Magnesium</keyword>
<keyword id="KW-0479">Metal-binding</keyword>
<keyword id="KW-0547">Nucleotide-binding</keyword>
<keyword id="KW-0658">Purine biosynthesis</keyword>
<keyword id="KW-1185">Reference proteome</keyword>